<keyword id="KW-0021">Allosteric enzyme</keyword>
<keyword id="KW-0963">Cytoplasm</keyword>
<keyword id="KW-0520">NAD</keyword>
<keyword id="KW-0560">Oxidoreductase</keyword>
<keyword id="KW-0597">Phosphoprotein</keyword>
<keyword id="KW-1185">Reference proteome</keyword>
<feature type="chain" id="PRO_1000072421" description="L-lactate dehydrogenase">
    <location>
        <begin position="1"/>
        <end position="310"/>
    </location>
</feature>
<feature type="active site" description="Proton acceptor" evidence="1">
    <location>
        <position position="172"/>
    </location>
</feature>
<feature type="binding site" evidence="1">
    <location>
        <position position="11"/>
    </location>
    <ligand>
        <name>NAD(+)</name>
        <dbReference type="ChEBI" id="CHEBI:57540"/>
    </ligand>
</feature>
<feature type="binding site" evidence="1">
    <location>
        <position position="32"/>
    </location>
    <ligand>
        <name>NAD(+)</name>
        <dbReference type="ChEBI" id="CHEBI:57540"/>
    </ligand>
</feature>
<feature type="binding site" evidence="1">
    <location>
        <position position="37"/>
    </location>
    <ligand>
        <name>NAD(+)</name>
        <dbReference type="ChEBI" id="CHEBI:57540"/>
    </ligand>
</feature>
<feature type="binding site" evidence="1">
    <location>
        <position position="79"/>
    </location>
    <ligand>
        <name>substrate</name>
    </ligand>
</feature>
<feature type="binding site" evidence="1">
    <location>
        <position position="85"/>
    </location>
    <ligand>
        <name>substrate</name>
    </ligand>
</feature>
<feature type="binding site" evidence="1">
    <location>
        <begin position="115"/>
        <end position="117"/>
    </location>
    <ligand>
        <name>NAD(+)</name>
        <dbReference type="ChEBI" id="CHEBI:57540"/>
    </ligand>
</feature>
<feature type="binding site" evidence="1">
    <location>
        <begin position="117"/>
        <end position="120"/>
    </location>
    <ligand>
        <name>substrate</name>
    </ligand>
</feature>
<feature type="binding site" evidence="1">
    <location>
        <position position="140"/>
    </location>
    <ligand>
        <name>NAD(+)</name>
        <dbReference type="ChEBI" id="CHEBI:57540"/>
    </ligand>
</feature>
<feature type="binding site" evidence="1">
    <location>
        <begin position="145"/>
        <end position="148"/>
    </location>
    <ligand>
        <name>substrate</name>
    </ligand>
</feature>
<feature type="binding site" evidence="1">
    <location>
        <position position="150"/>
    </location>
    <ligand>
        <name>beta-D-fructose 1,6-bisphosphate</name>
        <dbReference type="ChEBI" id="CHEBI:32966"/>
        <note>allosteric activator</note>
    </ligand>
</feature>
<feature type="binding site" evidence="1">
    <location>
        <position position="165"/>
    </location>
    <ligand>
        <name>beta-D-fructose 1,6-bisphosphate</name>
        <dbReference type="ChEBI" id="CHEBI:32966"/>
        <note>allosteric activator</note>
    </ligand>
</feature>
<feature type="binding site" evidence="1">
    <location>
        <position position="230"/>
    </location>
    <ligand>
        <name>substrate</name>
    </ligand>
</feature>
<feature type="modified residue" description="Phosphotyrosine" evidence="1">
    <location>
        <position position="221"/>
    </location>
</feature>
<gene>
    <name evidence="1" type="primary">ldh</name>
    <name type="ordered locus">Fnod_1175</name>
</gene>
<organism>
    <name type="scientific">Fervidobacterium nodosum (strain ATCC 35602 / DSM 5306 / Rt17-B1)</name>
    <dbReference type="NCBI Taxonomy" id="381764"/>
    <lineage>
        <taxon>Bacteria</taxon>
        <taxon>Thermotogati</taxon>
        <taxon>Thermotogota</taxon>
        <taxon>Thermotogae</taxon>
        <taxon>Thermotogales</taxon>
        <taxon>Fervidobacteriaceae</taxon>
        <taxon>Fervidobacterium</taxon>
    </lineage>
</organism>
<protein>
    <recommendedName>
        <fullName evidence="1">L-lactate dehydrogenase</fullName>
        <shortName evidence="1">L-LDH</shortName>
        <ecNumber evidence="1">1.1.1.27</ecNumber>
    </recommendedName>
</protein>
<accession>A7HM89</accession>
<name>LDH_FERNB</name>
<comment type="function">
    <text evidence="1">Catalyzes the conversion of lactate to pyruvate.</text>
</comment>
<comment type="catalytic activity">
    <reaction evidence="1">
        <text>(S)-lactate + NAD(+) = pyruvate + NADH + H(+)</text>
        <dbReference type="Rhea" id="RHEA:23444"/>
        <dbReference type="ChEBI" id="CHEBI:15361"/>
        <dbReference type="ChEBI" id="CHEBI:15378"/>
        <dbReference type="ChEBI" id="CHEBI:16651"/>
        <dbReference type="ChEBI" id="CHEBI:57540"/>
        <dbReference type="ChEBI" id="CHEBI:57945"/>
        <dbReference type="EC" id="1.1.1.27"/>
    </reaction>
</comment>
<comment type="activity regulation">
    <text evidence="1">Allosterically activated by fructose 1,6-bisphosphate (FBP).</text>
</comment>
<comment type="pathway">
    <text evidence="1">Fermentation; pyruvate fermentation to lactate; (S)-lactate from pyruvate: step 1/1.</text>
</comment>
<comment type="subunit">
    <text evidence="1">Homotetramer.</text>
</comment>
<comment type="subcellular location">
    <subcellularLocation>
        <location evidence="1">Cytoplasm</location>
    </subcellularLocation>
</comment>
<comment type="similarity">
    <text evidence="1">Belongs to the LDH/MDH superfamily. LDH family.</text>
</comment>
<reference key="1">
    <citation type="submission" date="2007-07" db="EMBL/GenBank/DDBJ databases">
        <title>Complete sequence of Fervidobacterium nodosum Rt17-B1.</title>
        <authorList>
            <consortium name="US DOE Joint Genome Institute"/>
            <person name="Copeland A."/>
            <person name="Lucas S."/>
            <person name="Lapidus A."/>
            <person name="Barry K."/>
            <person name="Glavina del Rio T."/>
            <person name="Dalin E."/>
            <person name="Tice H."/>
            <person name="Pitluck S."/>
            <person name="Saunders E."/>
            <person name="Brettin T."/>
            <person name="Bruce D."/>
            <person name="Detter J.C."/>
            <person name="Han C."/>
            <person name="Schmutz J."/>
            <person name="Larimer F."/>
            <person name="Land M."/>
            <person name="Hauser L."/>
            <person name="Kyrpides N."/>
            <person name="Mikhailova N."/>
            <person name="Nelson K."/>
            <person name="Gogarten J.P."/>
            <person name="Noll K."/>
            <person name="Richardson P."/>
        </authorList>
    </citation>
    <scope>NUCLEOTIDE SEQUENCE [LARGE SCALE GENOMIC DNA]</scope>
    <source>
        <strain>ATCC 35602 / DSM 5306 / Rt17-B1</strain>
    </source>
</reference>
<proteinExistence type="inferred from homology"/>
<sequence>MKVSIYGAGRVGVSIAFSLLHTSLVDEMVLIDIDKKRAEGEALDLLHSSSMFKSCNIWAGDSKDIEDSDFIVITAGRSQRPGETRLELLGDNVRIMKEISEDIVKYSPNSIIINVTNPVDVLTYFIWQFTNLPSQRVIGTGTTLDTARLRVLLSQQCGISPASIHAYVIGEHGDSEFVPFSNATIGGLKLIDYCKLCENNSEQGFCLNLKIIEEKVRKAAYEIIERKGATNLAIGAVTARLISSMWRNEKRVWTISVLVDGIYIGYPSVIGKSGVEKVLRLNLSEDEEKKFQYSRSVIQKSIEEIKSKIF</sequence>
<dbReference type="EC" id="1.1.1.27" evidence="1"/>
<dbReference type="EMBL" id="CP000771">
    <property type="protein sequence ID" value="ABS61022.1"/>
    <property type="molecule type" value="Genomic_DNA"/>
</dbReference>
<dbReference type="RefSeq" id="WP_011994334.1">
    <property type="nucleotide sequence ID" value="NC_009718.1"/>
</dbReference>
<dbReference type="SMR" id="A7HM89"/>
<dbReference type="STRING" id="381764.Fnod_1175"/>
<dbReference type="KEGG" id="fno:Fnod_1175"/>
<dbReference type="eggNOG" id="COG0039">
    <property type="taxonomic scope" value="Bacteria"/>
</dbReference>
<dbReference type="HOGENOM" id="CLU_045401_1_1_0"/>
<dbReference type="OrthoDB" id="9802969at2"/>
<dbReference type="UniPathway" id="UPA00554">
    <property type="reaction ID" value="UER00611"/>
</dbReference>
<dbReference type="Proteomes" id="UP000002415">
    <property type="component" value="Chromosome"/>
</dbReference>
<dbReference type="GO" id="GO:0005737">
    <property type="term" value="C:cytoplasm"/>
    <property type="evidence" value="ECO:0007669"/>
    <property type="project" value="UniProtKB-SubCell"/>
</dbReference>
<dbReference type="GO" id="GO:0004459">
    <property type="term" value="F:L-lactate dehydrogenase activity"/>
    <property type="evidence" value="ECO:0007669"/>
    <property type="project" value="UniProtKB-UniRule"/>
</dbReference>
<dbReference type="GO" id="GO:0006096">
    <property type="term" value="P:glycolytic process"/>
    <property type="evidence" value="ECO:0007669"/>
    <property type="project" value="UniProtKB-UniRule"/>
</dbReference>
<dbReference type="GO" id="GO:0006089">
    <property type="term" value="P:lactate metabolic process"/>
    <property type="evidence" value="ECO:0007669"/>
    <property type="project" value="TreeGrafter"/>
</dbReference>
<dbReference type="CDD" id="cd05292">
    <property type="entry name" value="LDH_2"/>
    <property type="match status" value="1"/>
</dbReference>
<dbReference type="FunFam" id="3.40.50.720:FF:000018">
    <property type="entry name" value="Malate dehydrogenase"/>
    <property type="match status" value="1"/>
</dbReference>
<dbReference type="Gene3D" id="3.90.110.10">
    <property type="entry name" value="Lactate dehydrogenase/glycoside hydrolase, family 4, C-terminal"/>
    <property type="match status" value="1"/>
</dbReference>
<dbReference type="Gene3D" id="3.40.50.720">
    <property type="entry name" value="NAD(P)-binding Rossmann-like Domain"/>
    <property type="match status" value="1"/>
</dbReference>
<dbReference type="HAMAP" id="MF_00488">
    <property type="entry name" value="Lactate_dehydrog"/>
    <property type="match status" value="1"/>
</dbReference>
<dbReference type="InterPro" id="IPR001557">
    <property type="entry name" value="L-lactate/malate_DH"/>
</dbReference>
<dbReference type="InterPro" id="IPR011304">
    <property type="entry name" value="L-lactate_DH"/>
</dbReference>
<dbReference type="InterPro" id="IPR018177">
    <property type="entry name" value="L-lactate_DH_AS"/>
</dbReference>
<dbReference type="InterPro" id="IPR022383">
    <property type="entry name" value="Lactate/malate_DH_C"/>
</dbReference>
<dbReference type="InterPro" id="IPR001236">
    <property type="entry name" value="Lactate/malate_DH_N"/>
</dbReference>
<dbReference type="InterPro" id="IPR015955">
    <property type="entry name" value="Lactate_DH/Glyco_Ohase_4_C"/>
</dbReference>
<dbReference type="InterPro" id="IPR036291">
    <property type="entry name" value="NAD(P)-bd_dom_sf"/>
</dbReference>
<dbReference type="NCBIfam" id="TIGR01771">
    <property type="entry name" value="L-LDH-NAD"/>
    <property type="match status" value="1"/>
</dbReference>
<dbReference type="PANTHER" id="PTHR43128">
    <property type="entry name" value="L-2-HYDROXYCARBOXYLATE DEHYDROGENASE (NAD(P)(+))"/>
    <property type="match status" value="1"/>
</dbReference>
<dbReference type="PANTHER" id="PTHR43128:SF16">
    <property type="entry name" value="L-LACTATE DEHYDROGENASE"/>
    <property type="match status" value="1"/>
</dbReference>
<dbReference type="Pfam" id="PF02866">
    <property type="entry name" value="Ldh_1_C"/>
    <property type="match status" value="1"/>
</dbReference>
<dbReference type="Pfam" id="PF00056">
    <property type="entry name" value="Ldh_1_N"/>
    <property type="match status" value="1"/>
</dbReference>
<dbReference type="PIRSF" id="PIRSF000102">
    <property type="entry name" value="Lac_mal_DH"/>
    <property type="match status" value="1"/>
</dbReference>
<dbReference type="PRINTS" id="PR00086">
    <property type="entry name" value="LLDHDRGNASE"/>
</dbReference>
<dbReference type="SUPFAM" id="SSF56327">
    <property type="entry name" value="LDH C-terminal domain-like"/>
    <property type="match status" value="1"/>
</dbReference>
<dbReference type="SUPFAM" id="SSF51735">
    <property type="entry name" value="NAD(P)-binding Rossmann-fold domains"/>
    <property type="match status" value="1"/>
</dbReference>
<dbReference type="PROSITE" id="PS00064">
    <property type="entry name" value="L_LDH"/>
    <property type="match status" value="1"/>
</dbReference>
<evidence type="ECO:0000255" key="1">
    <source>
        <dbReference type="HAMAP-Rule" id="MF_00488"/>
    </source>
</evidence>